<organism>
    <name type="scientific">Shewanella denitrificans (strain OS217 / ATCC BAA-1090 / DSM 15013)</name>
    <dbReference type="NCBI Taxonomy" id="318161"/>
    <lineage>
        <taxon>Bacteria</taxon>
        <taxon>Pseudomonadati</taxon>
        <taxon>Pseudomonadota</taxon>
        <taxon>Gammaproteobacteria</taxon>
        <taxon>Alteromonadales</taxon>
        <taxon>Shewanellaceae</taxon>
        <taxon>Shewanella</taxon>
    </lineage>
</organism>
<feature type="chain" id="PRO_0000264208" description="Transcriptional repressor NrdR">
    <location>
        <begin position="1"/>
        <end position="149"/>
    </location>
</feature>
<feature type="domain" description="ATP-cone" evidence="1">
    <location>
        <begin position="49"/>
        <end position="139"/>
    </location>
</feature>
<feature type="zinc finger region" evidence="1">
    <location>
        <begin position="3"/>
        <end position="34"/>
    </location>
</feature>
<reference key="1">
    <citation type="submission" date="2006-03" db="EMBL/GenBank/DDBJ databases">
        <title>Complete sequence of Shewanella denitrificans OS217.</title>
        <authorList>
            <consortium name="US DOE Joint Genome Institute"/>
            <person name="Copeland A."/>
            <person name="Lucas S."/>
            <person name="Lapidus A."/>
            <person name="Barry K."/>
            <person name="Detter J.C."/>
            <person name="Glavina del Rio T."/>
            <person name="Hammon N."/>
            <person name="Israni S."/>
            <person name="Dalin E."/>
            <person name="Tice H."/>
            <person name="Pitluck S."/>
            <person name="Brettin T."/>
            <person name="Bruce D."/>
            <person name="Han C."/>
            <person name="Tapia R."/>
            <person name="Gilna P."/>
            <person name="Kiss H."/>
            <person name="Schmutz J."/>
            <person name="Larimer F."/>
            <person name="Land M."/>
            <person name="Hauser L."/>
            <person name="Kyrpides N."/>
            <person name="Lykidis A."/>
            <person name="Richardson P."/>
        </authorList>
    </citation>
    <scope>NUCLEOTIDE SEQUENCE [LARGE SCALE GENOMIC DNA]</scope>
    <source>
        <strain>OS217 / ATCC BAA-1090 / DSM 15013</strain>
    </source>
</reference>
<proteinExistence type="inferred from homology"/>
<comment type="function">
    <text evidence="1">Negatively regulates transcription of bacterial ribonucleotide reductase nrd genes and operons by binding to NrdR-boxes.</text>
</comment>
<comment type="cofactor">
    <cofactor evidence="1">
        <name>Zn(2+)</name>
        <dbReference type="ChEBI" id="CHEBI:29105"/>
    </cofactor>
    <text evidence="1">Binds 1 zinc ion.</text>
</comment>
<comment type="similarity">
    <text evidence="1">Belongs to the NrdR family.</text>
</comment>
<sequence>MHCPFCSATDTKVIDSRLVADGHQVRRRRECTLCHERFTTFEGAELVMPRVIKRDDTRQPFDEDKLRGGMLRAVEKRPVSMDQLEQALTKIKSTLRATGEREINSEMIGNLMMEQLMHLDKVAYIRFASVYRAFEDVSQFGEAIAKLEK</sequence>
<evidence type="ECO:0000255" key="1">
    <source>
        <dbReference type="HAMAP-Rule" id="MF_00440"/>
    </source>
</evidence>
<protein>
    <recommendedName>
        <fullName evidence="1">Transcriptional repressor NrdR</fullName>
    </recommendedName>
</protein>
<name>NRDR_SHEDO</name>
<accession>Q12Q47</accession>
<keyword id="KW-0067">ATP-binding</keyword>
<keyword id="KW-0238">DNA-binding</keyword>
<keyword id="KW-0479">Metal-binding</keyword>
<keyword id="KW-0547">Nucleotide-binding</keyword>
<keyword id="KW-1185">Reference proteome</keyword>
<keyword id="KW-0678">Repressor</keyword>
<keyword id="KW-0804">Transcription</keyword>
<keyword id="KW-0805">Transcription regulation</keyword>
<keyword id="KW-0862">Zinc</keyword>
<keyword id="KW-0863">Zinc-finger</keyword>
<dbReference type="EMBL" id="CP000302">
    <property type="protein sequence ID" value="ABE54429.1"/>
    <property type="molecule type" value="Genomic_DNA"/>
</dbReference>
<dbReference type="RefSeq" id="WP_011495590.1">
    <property type="nucleotide sequence ID" value="NC_007954.1"/>
</dbReference>
<dbReference type="SMR" id="Q12Q47"/>
<dbReference type="STRING" id="318161.Sden_1143"/>
<dbReference type="KEGG" id="sdn:Sden_1143"/>
<dbReference type="eggNOG" id="COG1327">
    <property type="taxonomic scope" value="Bacteria"/>
</dbReference>
<dbReference type="HOGENOM" id="CLU_108412_0_0_6"/>
<dbReference type="OrthoDB" id="9807461at2"/>
<dbReference type="Proteomes" id="UP000001982">
    <property type="component" value="Chromosome"/>
</dbReference>
<dbReference type="GO" id="GO:0005524">
    <property type="term" value="F:ATP binding"/>
    <property type="evidence" value="ECO:0007669"/>
    <property type="project" value="UniProtKB-KW"/>
</dbReference>
<dbReference type="GO" id="GO:0003677">
    <property type="term" value="F:DNA binding"/>
    <property type="evidence" value="ECO:0007669"/>
    <property type="project" value="UniProtKB-KW"/>
</dbReference>
<dbReference type="GO" id="GO:0008270">
    <property type="term" value="F:zinc ion binding"/>
    <property type="evidence" value="ECO:0007669"/>
    <property type="project" value="UniProtKB-UniRule"/>
</dbReference>
<dbReference type="GO" id="GO:0045892">
    <property type="term" value="P:negative regulation of DNA-templated transcription"/>
    <property type="evidence" value="ECO:0007669"/>
    <property type="project" value="UniProtKB-UniRule"/>
</dbReference>
<dbReference type="HAMAP" id="MF_00440">
    <property type="entry name" value="NrdR"/>
    <property type="match status" value="1"/>
</dbReference>
<dbReference type="InterPro" id="IPR005144">
    <property type="entry name" value="ATP-cone_dom"/>
</dbReference>
<dbReference type="InterPro" id="IPR055173">
    <property type="entry name" value="NrdR-like_N"/>
</dbReference>
<dbReference type="InterPro" id="IPR003796">
    <property type="entry name" value="RNR_NrdR-like"/>
</dbReference>
<dbReference type="NCBIfam" id="TIGR00244">
    <property type="entry name" value="transcriptional regulator NrdR"/>
    <property type="match status" value="1"/>
</dbReference>
<dbReference type="PANTHER" id="PTHR30455">
    <property type="entry name" value="TRANSCRIPTIONAL REPRESSOR NRDR"/>
    <property type="match status" value="1"/>
</dbReference>
<dbReference type="PANTHER" id="PTHR30455:SF2">
    <property type="entry name" value="TRANSCRIPTIONAL REPRESSOR NRDR"/>
    <property type="match status" value="1"/>
</dbReference>
<dbReference type="Pfam" id="PF03477">
    <property type="entry name" value="ATP-cone"/>
    <property type="match status" value="1"/>
</dbReference>
<dbReference type="Pfam" id="PF22811">
    <property type="entry name" value="Zn_ribbon_NrdR"/>
    <property type="match status" value="1"/>
</dbReference>
<dbReference type="PROSITE" id="PS51161">
    <property type="entry name" value="ATP_CONE"/>
    <property type="match status" value="1"/>
</dbReference>
<gene>
    <name evidence="1" type="primary">nrdR</name>
    <name type="ordered locus">Sden_1143</name>
</gene>